<sequence length="303" mass="34201">MSHISVLLHETVDALLANRDTGIYIDGTFGRGGHTRLLLSKLGSDAQVYGFDKDPQALAVAHQLEQEDLRFKIIHASFADIQTELEQRGITQVEGVMADLGVSSPQLDQAERGFSFMQDGPLDMRMDNSQGKTAAEWLLSIEEEALANIIYQYGEERYSRRIARAIKQAGALETTAQLAELVKTAHPKWEKHKHPATRTFQAIRIAINKELEDIEIFLPQAVTLLKPEGRLAVITFHSLEDRLIKQFIQKESTLPEDSGWGLPQKQVDSRRLKKISRIRASEEEVKANPRSRSAWLRVAERLV</sequence>
<protein>
    <recommendedName>
        <fullName evidence="1">Ribosomal RNA small subunit methyltransferase H</fullName>
        <ecNumber evidence="1">2.1.1.199</ecNumber>
    </recommendedName>
    <alternativeName>
        <fullName evidence="1">16S rRNA m(4)C1402 methyltransferase</fullName>
    </alternativeName>
    <alternativeName>
        <fullName evidence="1">rRNA (cytosine-N(4)-)-methyltransferase RsmH</fullName>
    </alternativeName>
</protein>
<comment type="function">
    <text evidence="1">Specifically methylates the N4 position of cytidine in position 1402 (C1402) of 16S rRNA.</text>
</comment>
<comment type="catalytic activity">
    <reaction evidence="1">
        <text>cytidine(1402) in 16S rRNA + S-adenosyl-L-methionine = N(4)-methylcytidine(1402) in 16S rRNA + S-adenosyl-L-homocysteine + H(+)</text>
        <dbReference type="Rhea" id="RHEA:42928"/>
        <dbReference type="Rhea" id="RHEA-COMP:10286"/>
        <dbReference type="Rhea" id="RHEA-COMP:10287"/>
        <dbReference type="ChEBI" id="CHEBI:15378"/>
        <dbReference type="ChEBI" id="CHEBI:57856"/>
        <dbReference type="ChEBI" id="CHEBI:59789"/>
        <dbReference type="ChEBI" id="CHEBI:74506"/>
        <dbReference type="ChEBI" id="CHEBI:82748"/>
        <dbReference type="EC" id="2.1.1.199"/>
    </reaction>
</comment>
<comment type="subcellular location">
    <subcellularLocation>
        <location evidence="1">Cytoplasm</location>
    </subcellularLocation>
</comment>
<comment type="similarity">
    <text evidence="1">Belongs to the methyltransferase superfamily. RsmH family.</text>
</comment>
<accession>Q6F7D1</accession>
<organism>
    <name type="scientific">Acinetobacter baylyi (strain ATCC 33305 / BD413 / ADP1)</name>
    <dbReference type="NCBI Taxonomy" id="62977"/>
    <lineage>
        <taxon>Bacteria</taxon>
        <taxon>Pseudomonadati</taxon>
        <taxon>Pseudomonadota</taxon>
        <taxon>Gammaproteobacteria</taxon>
        <taxon>Moraxellales</taxon>
        <taxon>Moraxellaceae</taxon>
        <taxon>Acinetobacter</taxon>
    </lineage>
</organism>
<evidence type="ECO:0000255" key="1">
    <source>
        <dbReference type="HAMAP-Rule" id="MF_01007"/>
    </source>
</evidence>
<keyword id="KW-0963">Cytoplasm</keyword>
<keyword id="KW-0489">Methyltransferase</keyword>
<keyword id="KW-0698">rRNA processing</keyword>
<keyword id="KW-0949">S-adenosyl-L-methionine</keyword>
<keyword id="KW-0808">Transferase</keyword>
<gene>
    <name evidence="1" type="primary">rsmH</name>
    <name type="synonym">mraW</name>
    <name type="ordered locus">ACIAD3368</name>
</gene>
<proteinExistence type="inferred from homology"/>
<feature type="chain" id="PRO_0000108563" description="Ribosomal RNA small subunit methyltransferase H">
    <location>
        <begin position="1"/>
        <end position="303"/>
    </location>
</feature>
<feature type="binding site" evidence="1">
    <location>
        <begin position="32"/>
        <end position="34"/>
    </location>
    <ligand>
        <name>S-adenosyl-L-methionine</name>
        <dbReference type="ChEBI" id="CHEBI:59789"/>
    </ligand>
</feature>
<feature type="binding site" evidence="1">
    <location>
        <position position="52"/>
    </location>
    <ligand>
        <name>S-adenosyl-L-methionine</name>
        <dbReference type="ChEBI" id="CHEBI:59789"/>
    </ligand>
</feature>
<feature type="binding site" evidence="1">
    <location>
        <position position="78"/>
    </location>
    <ligand>
        <name>S-adenosyl-L-methionine</name>
        <dbReference type="ChEBI" id="CHEBI:59789"/>
    </ligand>
</feature>
<feature type="binding site" evidence="1">
    <location>
        <position position="99"/>
    </location>
    <ligand>
        <name>S-adenosyl-L-methionine</name>
        <dbReference type="ChEBI" id="CHEBI:59789"/>
    </ligand>
</feature>
<feature type="binding site" evidence="1">
    <location>
        <position position="106"/>
    </location>
    <ligand>
        <name>S-adenosyl-L-methionine</name>
        <dbReference type="ChEBI" id="CHEBI:59789"/>
    </ligand>
</feature>
<reference key="1">
    <citation type="journal article" date="2004" name="Nucleic Acids Res.">
        <title>Unique features revealed by the genome sequence of Acinetobacter sp. ADP1, a versatile and naturally transformation competent bacterium.</title>
        <authorList>
            <person name="Barbe V."/>
            <person name="Vallenet D."/>
            <person name="Fonknechten N."/>
            <person name="Kreimeyer A."/>
            <person name="Oztas S."/>
            <person name="Labarre L."/>
            <person name="Cruveiller S."/>
            <person name="Robert C."/>
            <person name="Duprat S."/>
            <person name="Wincker P."/>
            <person name="Ornston L.N."/>
            <person name="Weissenbach J."/>
            <person name="Marliere P."/>
            <person name="Cohen G.N."/>
            <person name="Medigue C."/>
        </authorList>
    </citation>
    <scope>NUCLEOTIDE SEQUENCE [LARGE SCALE GENOMIC DNA]</scope>
    <source>
        <strain>ATCC 33305 / BD413 / ADP1</strain>
    </source>
</reference>
<dbReference type="EC" id="2.1.1.199" evidence="1"/>
<dbReference type="EMBL" id="CR543861">
    <property type="protein sequence ID" value="CAG70034.1"/>
    <property type="molecule type" value="Genomic_DNA"/>
</dbReference>
<dbReference type="RefSeq" id="WP_004923689.1">
    <property type="nucleotide sequence ID" value="NC_005966.1"/>
</dbReference>
<dbReference type="SMR" id="Q6F7D1"/>
<dbReference type="STRING" id="202950.GCA_001485005_02206"/>
<dbReference type="GeneID" id="45235562"/>
<dbReference type="KEGG" id="aci:ACIAD3368"/>
<dbReference type="eggNOG" id="COG0275">
    <property type="taxonomic scope" value="Bacteria"/>
</dbReference>
<dbReference type="HOGENOM" id="CLU_038422_2_0_6"/>
<dbReference type="OrthoDB" id="9806637at2"/>
<dbReference type="BioCyc" id="ASP62977:ACIAD_RS15235-MONOMER"/>
<dbReference type="Proteomes" id="UP000000430">
    <property type="component" value="Chromosome"/>
</dbReference>
<dbReference type="GO" id="GO:0005737">
    <property type="term" value="C:cytoplasm"/>
    <property type="evidence" value="ECO:0007669"/>
    <property type="project" value="UniProtKB-SubCell"/>
</dbReference>
<dbReference type="GO" id="GO:0071424">
    <property type="term" value="F:rRNA (cytosine-N4-)-methyltransferase activity"/>
    <property type="evidence" value="ECO:0007669"/>
    <property type="project" value="UniProtKB-UniRule"/>
</dbReference>
<dbReference type="GO" id="GO:0070475">
    <property type="term" value="P:rRNA base methylation"/>
    <property type="evidence" value="ECO:0007669"/>
    <property type="project" value="UniProtKB-UniRule"/>
</dbReference>
<dbReference type="FunFam" id="1.10.150.170:FF:000001">
    <property type="entry name" value="Ribosomal RNA small subunit methyltransferase H"/>
    <property type="match status" value="1"/>
</dbReference>
<dbReference type="Gene3D" id="1.10.150.170">
    <property type="entry name" value="Putative methyltransferase TM0872, insert domain"/>
    <property type="match status" value="1"/>
</dbReference>
<dbReference type="Gene3D" id="3.40.50.150">
    <property type="entry name" value="Vaccinia Virus protein VP39"/>
    <property type="match status" value="1"/>
</dbReference>
<dbReference type="HAMAP" id="MF_01007">
    <property type="entry name" value="16SrRNA_methyltr_H"/>
    <property type="match status" value="1"/>
</dbReference>
<dbReference type="InterPro" id="IPR002903">
    <property type="entry name" value="RsmH"/>
</dbReference>
<dbReference type="InterPro" id="IPR023397">
    <property type="entry name" value="SAM-dep_MeTrfase_MraW_recog"/>
</dbReference>
<dbReference type="InterPro" id="IPR029063">
    <property type="entry name" value="SAM-dependent_MTases_sf"/>
</dbReference>
<dbReference type="NCBIfam" id="TIGR00006">
    <property type="entry name" value="16S rRNA (cytosine(1402)-N(4))-methyltransferase RsmH"/>
    <property type="match status" value="1"/>
</dbReference>
<dbReference type="PANTHER" id="PTHR11265:SF0">
    <property type="entry name" value="12S RRNA N4-METHYLCYTIDINE METHYLTRANSFERASE"/>
    <property type="match status" value="1"/>
</dbReference>
<dbReference type="PANTHER" id="PTHR11265">
    <property type="entry name" value="S-ADENOSYL-METHYLTRANSFERASE MRAW"/>
    <property type="match status" value="1"/>
</dbReference>
<dbReference type="Pfam" id="PF01795">
    <property type="entry name" value="Methyltransf_5"/>
    <property type="match status" value="1"/>
</dbReference>
<dbReference type="PIRSF" id="PIRSF004486">
    <property type="entry name" value="MraW"/>
    <property type="match status" value="1"/>
</dbReference>
<dbReference type="SUPFAM" id="SSF81799">
    <property type="entry name" value="Putative methyltransferase TM0872, insert domain"/>
    <property type="match status" value="1"/>
</dbReference>
<dbReference type="SUPFAM" id="SSF53335">
    <property type="entry name" value="S-adenosyl-L-methionine-dependent methyltransferases"/>
    <property type="match status" value="1"/>
</dbReference>
<name>RSMH_ACIAD</name>